<accession>Q9FM10</accession>
<accession>A0MFR4</accession>
<accession>Q1PDG2</accession>
<keyword id="KW-1003">Cell membrane</keyword>
<keyword id="KW-0472">Membrane</keyword>
<keyword id="KW-1185">Reference proteome</keyword>
<keyword id="KW-0677">Repeat</keyword>
<keyword id="KW-0762">Sugar transport</keyword>
<keyword id="KW-0812">Transmembrane</keyword>
<keyword id="KW-1133">Transmembrane helix</keyword>
<keyword id="KW-0813">Transport</keyword>
<reference key="1">
    <citation type="journal article" date="1998" name="DNA Res.">
        <title>Structural analysis of Arabidopsis thaliana chromosome 5. IV. Sequence features of the regions of 1,456,315 bp covered by nineteen physically assigned P1 and TAC clones.</title>
        <authorList>
            <person name="Sato S."/>
            <person name="Kaneko T."/>
            <person name="Kotani H."/>
            <person name="Nakamura Y."/>
            <person name="Asamizu E."/>
            <person name="Miyajima N."/>
            <person name="Tabata S."/>
        </authorList>
    </citation>
    <scope>NUCLEOTIDE SEQUENCE [LARGE SCALE GENOMIC DNA]</scope>
    <source>
        <strain>cv. Columbia</strain>
    </source>
</reference>
<reference key="2">
    <citation type="journal article" date="2017" name="Plant J.">
        <title>Araport11: a complete reannotation of the Arabidopsis thaliana reference genome.</title>
        <authorList>
            <person name="Cheng C.Y."/>
            <person name="Krishnakumar V."/>
            <person name="Chan A.P."/>
            <person name="Thibaud-Nissen F."/>
            <person name="Schobel S."/>
            <person name="Town C.D."/>
        </authorList>
    </citation>
    <scope>GENOME REANNOTATION</scope>
    <source>
        <strain>cv. Columbia</strain>
    </source>
</reference>
<reference key="3">
    <citation type="journal article" date="2006" name="Plant Biotechnol. J.">
        <title>Simultaneous high-throughput recombinational cloning of open reading frames in closed and open configurations.</title>
        <authorList>
            <person name="Underwood B.A."/>
            <person name="Vanderhaeghen R."/>
            <person name="Whitford R."/>
            <person name="Town C.D."/>
            <person name="Hilson P."/>
        </authorList>
    </citation>
    <scope>NUCLEOTIDE SEQUENCE [LARGE SCALE MRNA] OF 30-155</scope>
    <source>
        <strain>cv. Columbia</strain>
    </source>
</reference>
<reference key="4">
    <citation type="journal article" date="2000" name="DNA Res.">
        <title>A large scale analysis of cDNA in Arabidopsis thaliana: generation of 12,028 non-redundant expressed sequence tags from normalized and size-selected cDNA libraries.</title>
        <authorList>
            <person name="Asamizu E."/>
            <person name="Nakamura Y."/>
            <person name="Sato S."/>
            <person name="Tabata S."/>
        </authorList>
    </citation>
    <scope>NUCLEOTIDE SEQUENCE [LARGE SCALE MRNA] OF 204-240</scope>
    <source>
        <strain>cv. Columbia</strain>
        <tissue>Flower bud</tissue>
    </source>
</reference>
<reference key="5">
    <citation type="journal article" date="2005" name="Plant Physiol.">
        <title>Green sperm. Identification of male gamete promoters in Arabidopsis.</title>
        <authorList>
            <person name="Engel M.L."/>
            <person name="Holmes-Davis R."/>
            <person name="McCormick S."/>
        </authorList>
    </citation>
    <scope>DEVELOPMENTAL STAGE</scope>
</reference>
<reference key="6">
    <citation type="journal article" date="2010" name="Nature">
        <title>Sugar transporters for intercellular exchange and nutrition of pathogens.</title>
        <authorList>
            <person name="Chen L.-Q."/>
            <person name="Hou B.-H."/>
            <person name="Lalonde S."/>
            <person name="Takanaga H."/>
            <person name="Hartung M.L."/>
            <person name="Qu X.-Q."/>
            <person name="Guo W.-J."/>
            <person name="Kim J.-G."/>
            <person name="Underwood W."/>
            <person name="Chaudhuri B."/>
            <person name="Chermak D."/>
            <person name="Antony G."/>
            <person name="White F.F."/>
            <person name="Somerville S.C."/>
            <person name="Mudgett M.B."/>
            <person name="Frommer W.B."/>
        </authorList>
    </citation>
    <scope>INDUCTION BY PATHOGENS</scope>
    <scope>GENE FAMILY</scope>
    <scope>NOMENCLATURE</scope>
    <source>
        <strain>cv. Columbia</strain>
    </source>
</reference>
<reference key="7">
    <citation type="journal article" date="2013" name="Proc. Natl. Acad. Sci. U.S.A.">
        <title>Functional role of oligomerization for bacterial and plant SWEET sugar transporter family.</title>
        <authorList>
            <person name="Xuan Y.H."/>
            <person name="Hu Y.B."/>
            <person name="Chen L.-Q."/>
            <person name="Sosso D."/>
            <person name="Ducat D.C."/>
            <person name="Hou B.-H."/>
            <person name="Frommer W.B."/>
        </authorList>
    </citation>
    <scope>SUBUNIT</scope>
    <scope>INTERACTION WITH SWEET6; SWEET8; SWEET9; SWEET11 AND SWEET12</scope>
</reference>
<reference key="8">
    <citation type="journal article" date="2015" name="Curr. Opin. Plant Biol.">
        <title>SWEETs, transporters for intracellular and intercellular sugar translocation.</title>
        <authorList>
            <person name="Eom J.-S."/>
            <person name="Chen L.-Q."/>
            <person name="Sosso D."/>
            <person name="Julius B.T."/>
            <person name="Lin I.W."/>
            <person name="Qu X.-Q."/>
            <person name="Braun D.M."/>
            <person name="Frommer W.B."/>
        </authorList>
    </citation>
    <scope>REVIEW</scope>
</reference>
<comment type="function">
    <text evidence="1 8">Mediates both low-affinity uptake and efflux of sugar across the plasma membrane (By similarity). May play roles in nurturing the male gametophyte (PubMed:25988582).</text>
</comment>
<comment type="subunit">
    <text evidence="5">Forms homooligomers and heterooligomers with SWEET6, SWEET8, SWEET9, SWEET11 and SWEET12.</text>
</comment>
<comment type="subcellular location">
    <subcellularLocation>
        <location evidence="1">Cell membrane</location>
        <topology evidence="1">Multi-pass membrane protein</topology>
    </subcellularLocation>
</comment>
<comment type="developmental stage">
    <text evidence="3">Expressed in the vegetative cell during the later stages of pollen development, mostly in tricellular pollen grains, and, to a lower extent, in bicellular pollen grains.</text>
</comment>
<comment type="induction">
    <text evidence="4">Slightly induced by the powdery mildew fungus G.cichoracearum and the pathogenic bacteria P.syringae pv. tomato.</text>
</comment>
<comment type="similarity">
    <text evidence="9">Belongs to the SWEET sugar transporter family.</text>
</comment>
<comment type="sequence caution" evidence="9">
    <conflict type="erroneous gene model prediction">
        <sequence resource="EMBL-CDS" id="BAB10854"/>
    </conflict>
</comment>
<feature type="chain" id="PRO_0000404106" description="Bidirectional sugar transporter SWEET5">
    <location>
        <begin position="1"/>
        <end position="240"/>
    </location>
</feature>
<feature type="topological domain" description="Extracellular" evidence="2">
    <location>
        <begin position="1"/>
        <end position="9"/>
    </location>
</feature>
<feature type="transmembrane region" description="Helical; Name=1" evidence="2">
    <location>
        <begin position="10"/>
        <end position="30"/>
    </location>
</feature>
<feature type="topological domain" description="Cytoplasmic" evidence="2">
    <location>
        <begin position="31"/>
        <end position="45"/>
    </location>
</feature>
<feature type="transmembrane region" description="Helical; Name=2" evidence="2">
    <location>
        <begin position="46"/>
        <end position="66"/>
    </location>
</feature>
<feature type="topological domain" description="Extracellular" evidence="2">
    <location>
        <begin position="67"/>
        <end position="72"/>
    </location>
</feature>
<feature type="transmembrane region" description="Helical; Name=3" evidence="2">
    <location>
        <begin position="73"/>
        <end position="93"/>
    </location>
</feature>
<feature type="topological domain" description="Cytoplasmic" evidence="2">
    <location>
        <begin position="94"/>
        <end position="103"/>
    </location>
</feature>
<feature type="transmembrane region" description="Helical; Name=4" evidence="2">
    <location>
        <begin position="104"/>
        <end position="124"/>
    </location>
</feature>
<feature type="topological domain" description="Extracellular" evidence="2">
    <location>
        <begin position="125"/>
        <end position="131"/>
    </location>
</feature>
<feature type="transmembrane region" description="Helical; Name=5" evidence="2">
    <location>
        <begin position="132"/>
        <end position="152"/>
    </location>
</feature>
<feature type="topological domain" description="Cytoplasmic" evidence="2">
    <location>
        <begin position="153"/>
        <end position="165"/>
    </location>
</feature>
<feature type="transmembrane region" description="Helical; Name=6" evidence="2">
    <location>
        <begin position="166"/>
        <end position="186"/>
    </location>
</feature>
<feature type="topological domain" description="Extracellular" evidence="2">
    <location>
        <begin position="187"/>
        <end position="190"/>
    </location>
</feature>
<feature type="transmembrane region" description="Helical; Name=7" evidence="2">
    <location>
        <begin position="191"/>
        <end position="211"/>
    </location>
</feature>
<feature type="topological domain" description="Cytoplasmic" evidence="2">
    <location>
        <begin position="212"/>
        <end position="240"/>
    </location>
</feature>
<feature type="domain" description="MtN3/slv 1">
    <location>
        <begin position="10"/>
        <end position="95"/>
    </location>
</feature>
<feature type="domain" description="MtN3/slv 2">
    <location>
        <begin position="133"/>
        <end position="217"/>
    </location>
</feature>
<feature type="sequence conflict" description="In Ref. 3; ABK28775." evidence="9" ref="3">
    <original>M</original>
    <variation>I</variation>
    <location>
        <position position="132"/>
    </location>
</feature>
<feature type="sequence conflict" description="In Ref. 3; ABK28775." evidence="9" ref="3">
    <original>KL</original>
    <variation>VG</variation>
    <location>
        <begin position="154"/>
        <end position="155"/>
    </location>
</feature>
<feature type="sequence conflict" description="In Ref. 3; ABE66274." evidence="9" ref="3">
    <original>K</original>
    <variation>V</variation>
    <location>
        <position position="154"/>
    </location>
</feature>
<gene>
    <name evidence="7" type="primary">SWEET5</name>
    <name evidence="6" type="synonym">VEX1</name>
    <name type="ordered locus">At5g62850</name>
    <name type="ORF">MQB2.17</name>
</gene>
<proteinExistence type="evidence at protein level"/>
<organism>
    <name type="scientific">Arabidopsis thaliana</name>
    <name type="common">Mouse-ear cress</name>
    <dbReference type="NCBI Taxonomy" id="3702"/>
    <lineage>
        <taxon>Eukaryota</taxon>
        <taxon>Viridiplantae</taxon>
        <taxon>Streptophyta</taxon>
        <taxon>Embryophyta</taxon>
        <taxon>Tracheophyta</taxon>
        <taxon>Spermatophyta</taxon>
        <taxon>Magnoliopsida</taxon>
        <taxon>eudicotyledons</taxon>
        <taxon>Gunneridae</taxon>
        <taxon>Pentapetalae</taxon>
        <taxon>rosids</taxon>
        <taxon>malvids</taxon>
        <taxon>Brassicales</taxon>
        <taxon>Brassicaceae</taxon>
        <taxon>Camelineae</taxon>
        <taxon>Arabidopsis</taxon>
    </lineage>
</organism>
<name>SWET5_ARATH</name>
<protein>
    <recommendedName>
        <fullName evidence="7">Bidirectional sugar transporter SWEET5</fullName>
        <shortName evidence="7">AtSWEET5</shortName>
    </recommendedName>
    <alternativeName>
        <fullName evidence="7">Protein SUGARS WILL EVENTUALLY BE EXPORTED TRANSPORTERS 5</fullName>
    </alternativeName>
    <alternativeName>
        <fullName evidence="6">Protein VEGETATIVE CELL EXPRESSED 1</fullName>
        <shortName evidence="6">AtVEX1</shortName>
    </alternativeName>
</protein>
<evidence type="ECO:0000250" key="1">
    <source>
        <dbReference type="UniProtKB" id="Q8L9J7"/>
    </source>
</evidence>
<evidence type="ECO:0000255" key="2"/>
<evidence type="ECO:0000269" key="3">
    <source>
    </source>
</evidence>
<evidence type="ECO:0000269" key="4">
    <source>
    </source>
</evidence>
<evidence type="ECO:0000269" key="5">
    <source>
    </source>
</evidence>
<evidence type="ECO:0000303" key="6">
    <source>
    </source>
</evidence>
<evidence type="ECO:0000303" key="7">
    <source>
    </source>
</evidence>
<evidence type="ECO:0000303" key="8">
    <source>
    </source>
</evidence>
<evidence type="ECO:0000305" key="9"/>
<dbReference type="EMBL" id="AB009053">
    <property type="protein sequence ID" value="BAB10854.1"/>
    <property type="status" value="ALT_SEQ"/>
    <property type="molecule type" value="Genomic_DNA"/>
</dbReference>
<dbReference type="EMBL" id="CP002688">
    <property type="protein sequence ID" value="AED97664.1"/>
    <property type="molecule type" value="Genomic_DNA"/>
</dbReference>
<dbReference type="EMBL" id="DQ447106">
    <property type="protein sequence ID" value="ABE66274.1"/>
    <property type="molecule type" value="mRNA"/>
</dbReference>
<dbReference type="EMBL" id="DQ653391">
    <property type="protein sequence ID" value="ABK28775.1"/>
    <property type="molecule type" value="mRNA"/>
</dbReference>
<dbReference type="EMBL" id="AV533590">
    <property type="status" value="NOT_ANNOTATED_CDS"/>
    <property type="molecule type" value="mRNA"/>
</dbReference>
<dbReference type="RefSeq" id="NP_001330980.1">
    <property type="nucleotide sequence ID" value="NM_001345563.1"/>
</dbReference>
<dbReference type="RefSeq" id="NP_201091.2">
    <property type="nucleotide sequence ID" value="NM_125680.3"/>
</dbReference>
<dbReference type="SMR" id="Q9FM10"/>
<dbReference type="BioGRID" id="21649">
    <property type="interactions" value="34"/>
</dbReference>
<dbReference type="FunCoup" id="Q9FM10">
    <property type="interactions" value="441"/>
</dbReference>
<dbReference type="IntAct" id="Q9FM10">
    <property type="interactions" value="27"/>
</dbReference>
<dbReference type="STRING" id="3702.Q9FM10"/>
<dbReference type="PaxDb" id="3702-AT5G62850.1"/>
<dbReference type="ProteomicsDB" id="226554"/>
<dbReference type="EnsemblPlants" id="AT5G62850.1">
    <property type="protein sequence ID" value="AT5G62850.1"/>
    <property type="gene ID" value="AT5G62850"/>
</dbReference>
<dbReference type="GeneID" id="836406"/>
<dbReference type="Gramene" id="AT5G62850.1">
    <property type="protein sequence ID" value="AT5G62850.1"/>
    <property type="gene ID" value="AT5G62850"/>
</dbReference>
<dbReference type="KEGG" id="ath:AT5G62850"/>
<dbReference type="Araport" id="AT5G62850"/>
<dbReference type="TAIR" id="AT5G62850">
    <property type="gene designation" value="ATVEX1"/>
</dbReference>
<dbReference type="eggNOG" id="KOG1623">
    <property type="taxonomic scope" value="Eukaryota"/>
</dbReference>
<dbReference type="HOGENOM" id="CLU_048643_1_0_1"/>
<dbReference type="InParanoid" id="Q9FM10"/>
<dbReference type="OMA" id="EMIFMAV"/>
<dbReference type="PhylomeDB" id="Q9FM10"/>
<dbReference type="PRO" id="PR:Q9FM10"/>
<dbReference type="Proteomes" id="UP000006548">
    <property type="component" value="Chromosome 5"/>
</dbReference>
<dbReference type="ExpressionAtlas" id="Q9FM10">
    <property type="expression patterns" value="baseline and differential"/>
</dbReference>
<dbReference type="GO" id="GO:0005886">
    <property type="term" value="C:plasma membrane"/>
    <property type="evidence" value="ECO:0000250"/>
    <property type="project" value="UniProtKB"/>
</dbReference>
<dbReference type="GO" id="GO:0051119">
    <property type="term" value="F:sugar transmembrane transporter activity"/>
    <property type="evidence" value="ECO:0000250"/>
    <property type="project" value="UniProtKB"/>
</dbReference>
<dbReference type="GO" id="GO:0051260">
    <property type="term" value="P:protein homooligomerization"/>
    <property type="evidence" value="ECO:0000314"/>
    <property type="project" value="UniProtKB"/>
</dbReference>
<dbReference type="FunFam" id="1.20.1280.290:FF:000001">
    <property type="entry name" value="Bidirectional sugar transporter SWEET"/>
    <property type="match status" value="1"/>
</dbReference>
<dbReference type="FunFam" id="1.20.1280.290:FF:000002">
    <property type="entry name" value="Bidirectional sugar transporter SWEET"/>
    <property type="match status" value="1"/>
</dbReference>
<dbReference type="Gene3D" id="1.20.1280.290">
    <property type="match status" value="2"/>
</dbReference>
<dbReference type="InterPro" id="IPR047664">
    <property type="entry name" value="SWEET"/>
</dbReference>
<dbReference type="InterPro" id="IPR004316">
    <property type="entry name" value="SWEET_rpt"/>
</dbReference>
<dbReference type="PANTHER" id="PTHR10791:SF159">
    <property type="entry name" value="BIDIRECTIONAL SUGAR TRANSPORTER SWEET5"/>
    <property type="match status" value="1"/>
</dbReference>
<dbReference type="PANTHER" id="PTHR10791">
    <property type="entry name" value="RAG1-ACTIVATING PROTEIN 1"/>
    <property type="match status" value="1"/>
</dbReference>
<dbReference type="Pfam" id="PF03083">
    <property type="entry name" value="MtN3_slv"/>
    <property type="match status" value="2"/>
</dbReference>
<sequence>MTDPHTARTIVGIVGNVISFGLFCAPIPTMVKIWKMKSVSEFKPDPYVATVLNCMMWTFYGLPFVQPDSLLVITINGTGLFMELVYVTIFFVFATSPVRRKITIAMVIEVIFMAVVIFCTMYFLHTTKQRSMLIGILCIVFNVIMYAAPLTVMKLVIKTKSVKYMPFFLSLANFMNGVVWVIYACLKFDPYILIPNGLGSLSGIIQLIIYITYYKTTNWNDDDEDKEKRYSNAGIELGQA</sequence>